<dbReference type="EC" id="4.2.3.3" evidence="1"/>
<dbReference type="EMBL" id="CP000924">
    <property type="protein sequence ID" value="ABY95094.1"/>
    <property type="molecule type" value="Genomic_DNA"/>
</dbReference>
<dbReference type="RefSeq" id="WP_009052621.1">
    <property type="nucleotide sequence ID" value="NC_010321.1"/>
</dbReference>
<dbReference type="SMR" id="B0KAD1"/>
<dbReference type="STRING" id="340099.Teth39_1444"/>
<dbReference type="KEGG" id="tpd:Teth39_1444"/>
<dbReference type="eggNOG" id="COG1803">
    <property type="taxonomic scope" value="Bacteria"/>
</dbReference>
<dbReference type="HOGENOM" id="CLU_120420_1_0_9"/>
<dbReference type="Proteomes" id="UP000002156">
    <property type="component" value="Chromosome"/>
</dbReference>
<dbReference type="GO" id="GO:0005829">
    <property type="term" value="C:cytosol"/>
    <property type="evidence" value="ECO:0007669"/>
    <property type="project" value="TreeGrafter"/>
</dbReference>
<dbReference type="GO" id="GO:0008929">
    <property type="term" value="F:methylglyoxal synthase activity"/>
    <property type="evidence" value="ECO:0007669"/>
    <property type="project" value="UniProtKB-UniRule"/>
</dbReference>
<dbReference type="GO" id="GO:0019242">
    <property type="term" value="P:methylglyoxal biosynthetic process"/>
    <property type="evidence" value="ECO:0007669"/>
    <property type="project" value="UniProtKB-UniRule"/>
</dbReference>
<dbReference type="CDD" id="cd01422">
    <property type="entry name" value="MGS"/>
    <property type="match status" value="1"/>
</dbReference>
<dbReference type="Gene3D" id="3.40.50.1380">
    <property type="entry name" value="Methylglyoxal synthase-like domain"/>
    <property type="match status" value="1"/>
</dbReference>
<dbReference type="HAMAP" id="MF_00549">
    <property type="entry name" value="Methylglyoxal_synth"/>
    <property type="match status" value="1"/>
</dbReference>
<dbReference type="InterPro" id="IPR004363">
    <property type="entry name" value="Methylgl_synth"/>
</dbReference>
<dbReference type="InterPro" id="IPR018148">
    <property type="entry name" value="Methylglyoxal_synth_AS"/>
</dbReference>
<dbReference type="InterPro" id="IPR011607">
    <property type="entry name" value="MGS-like_dom"/>
</dbReference>
<dbReference type="InterPro" id="IPR036914">
    <property type="entry name" value="MGS-like_dom_sf"/>
</dbReference>
<dbReference type="NCBIfam" id="TIGR00160">
    <property type="entry name" value="MGSA"/>
    <property type="match status" value="1"/>
</dbReference>
<dbReference type="NCBIfam" id="NF003559">
    <property type="entry name" value="PRK05234.1"/>
    <property type="match status" value="1"/>
</dbReference>
<dbReference type="PANTHER" id="PTHR30492">
    <property type="entry name" value="METHYLGLYOXAL SYNTHASE"/>
    <property type="match status" value="1"/>
</dbReference>
<dbReference type="PANTHER" id="PTHR30492:SF0">
    <property type="entry name" value="METHYLGLYOXAL SYNTHASE"/>
    <property type="match status" value="1"/>
</dbReference>
<dbReference type="Pfam" id="PF02142">
    <property type="entry name" value="MGS"/>
    <property type="match status" value="1"/>
</dbReference>
<dbReference type="PIRSF" id="PIRSF006614">
    <property type="entry name" value="Methylglyox_syn"/>
    <property type="match status" value="1"/>
</dbReference>
<dbReference type="SMART" id="SM00851">
    <property type="entry name" value="MGS"/>
    <property type="match status" value="1"/>
</dbReference>
<dbReference type="SUPFAM" id="SSF52335">
    <property type="entry name" value="Methylglyoxal synthase-like"/>
    <property type="match status" value="1"/>
</dbReference>
<dbReference type="PROSITE" id="PS01335">
    <property type="entry name" value="METHYLGLYOXAL_SYNTH"/>
    <property type="match status" value="1"/>
</dbReference>
<dbReference type="PROSITE" id="PS51855">
    <property type="entry name" value="MGS"/>
    <property type="match status" value="1"/>
</dbReference>
<gene>
    <name evidence="1" type="primary">mgsA</name>
    <name type="ordered locus">Teth39_1444</name>
</gene>
<organism>
    <name type="scientific">Thermoanaerobacter pseudethanolicus (strain ATCC 33223 / 39E)</name>
    <name type="common">Clostridium thermohydrosulfuricum</name>
    <dbReference type="NCBI Taxonomy" id="340099"/>
    <lineage>
        <taxon>Bacteria</taxon>
        <taxon>Bacillati</taxon>
        <taxon>Bacillota</taxon>
        <taxon>Clostridia</taxon>
        <taxon>Thermoanaerobacterales</taxon>
        <taxon>Thermoanaerobacteraceae</taxon>
        <taxon>Thermoanaerobacter</taxon>
    </lineage>
</organism>
<keyword id="KW-0456">Lyase</keyword>
<keyword id="KW-1185">Reference proteome</keyword>
<feature type="chain" id="PRO_1000129011" description="Methylglyoxal synthase">
    <location>
        <begin position="1"/>
        <end position="132"/>
    </location>
</feature>
<feature type="domain" description="MGS-like" evidence="1">
    <location>
        <begin position="1"/>
        <end position="132"/>
    </location>
</feature>
<feature type="active site" description="Proton donor/acceptor" evidence="1">
    <location>
        <position position="60"/>
    </location>
</feature>
<feature type="binding site" evidence="1">
    <location>
        <position position="8"/>
    </location>
    <ligand>
        <name>substrate</name>
    </ligand>
</feature>
<feature type="binding site" evidence="1">
    <location>
        <position position="12"/>
    </location>
    <ligand>
        <name>substrate</name>
    </ligand>
</feature>
<feature type="binding site" evidence="1">
    <location>
        <position position="87"/>
    </location>
    <ligand>
        <name>substrate</name>
    </ligand>
</feature>
<name>MGSA_THEP3</name>
<protein>
    <recommendedName>
        <fullName evidence="1">Methylglyoxal synthase</fullName>
        <shortName evidence="1">MGS</shortName>
        <ecNumber evidence="1">4.2.3.3</ecNumber>
    </recommendedName>
</protein>
<accession>B0KAD1</accession>
<evidence type="ECO:0000255" key="1">
    <source>
        <dbReference type="HAMAP-Rule" id="MF_00549"/>
    </source>
</evidence>
<reference key="1">
    <citation type="submission" date="2008-01" db="EMBL/GenBank/DDBJ databases">
        <title>Complete sequence of Thermoanaerobacter pseudethanolicus 39E.</title>
        <authorList>
            <person name="Copeland A."/>
            <person name="Lucas S."/>
            <person name="Lapidus A."/>
            <person name="Barry K."/>
            <person name="Glavina del Rio T."/>
            <person name="Dalin E."/>
            <person name="Tice H."/>
            <person name="Pitluck S."/>
            <person name="Bruce D."/>
            <person name="Goodwin L."/>
            <person name="Saunders E."/>
            <person name="Brettin T."/>
            <person name="Detter J.C."/>
            <person name="Han C."/>
            <person name="Schmutz J."/>
            <person name="Larimer F."/>
            <person name="Land M."/>
            <person name="Hauser L."/>
            <person name="Kyrpides N."/>
            <person name="Lykidis A."/>
            <person name="Hemme C."/>
            <person name="Fields M.W."/>
            <person name="He Z."/>
            <person name="Zhou J."/>
            <person name="Richardson P."/>
        </authorList>
    </citation>
    <scope>NUCLEOTIDE SEQUENCE [LARGE SCALE GENOMIC DNA]</scope>
    <source>
        <strain>ATCC 33223 / DSM 2355 / 39E</strain>
    </source>
</reference>
<sequence>MNIALIAHDQKKELMVNFAIAYKHIFEKCNIYATGHTGQLIKEATGLNVNCLLPGPLGGDQQIGAMIAENKIDMVIFLRDPLTAQPHEPDILALLRVCDVHSIPLATNIATAEVLLKGMEQGLLEWREIEDK</sequence>
<comment type="function">
    <text evidence="1">Catalyzes the formation of methylglyoxal from dihydroxyacetone phosphate.</text>
</comment>
<comment type="catalytic activity">
    <reaction evidence="1">
        <text>dihydroxyacetone phosphate = methylglyoxal + phosphate</text>
        <dbReference type="Rhea" id="RHEA:17937"/>
        <dbReference type="ChEBI" id="CHEBI:17158"/>
        <dbReference type="ChEBI" id="CHEBI:43474"/>
        <dbReference type="ChEBI" id="CHEBI:57642"/>
        <dbReference type="EC" id="4.2.3.3"/>
    </reaction>
</comment>
<comment type="similarity">
    <text evidence="1">Belongs to the methylglyoxal synthase family.</text>
</comment>
<proteinExistence type="inferred from homology"/>